<accession>Q2FHI3</accession>
<reference key="1">
    <citation type="journal article" date="2006" name="Lancet">
        <title>Complete genome sequence of USA300, an epidemic clone of community-acquired meticillin-resistant Staphylococcus aureus.</title>
        <authorList>
            <person name="Diep B.A."/>
            <person name="Gill S.R."/>
            <person name="Chang R.F."/>
            <person name="Phan T.H."/>
            <person name="Chen J.H."/>
            <person name="Davidson M.G."/>
            <person name="Lin F."/>
            <person name="Lin J."/>
            <person name="Carleton H.A."/>
            <person name="Mongodin E.F."/>
            <person name="Sensabaugh G.F."/>
            <person name="Perdreau-Remington F."/>
        </authorList>
    </citation>
    <scope>NUCLEOTIDE SEQUENCE [LARGE SCALE GENOMIC DNA]</scope>
    <source>
        <strain>USA300</strain>
    </source>
</reference>
<reference key="2">
    <citation type="journal article" date="2012" name="Infect. Immun.">
        <title>CodY deletion enhances in vivo virulence of community-associated methicillin-resistant Staphylococcus aureus clone USA300.</title>
        <authorList>
            <person name="Montgomery C.P."/>
            <person name="Boyle-Vavra S."/>
            <person name="Roux A."/>
            <person name="Ebine K."/>
            <person name="Sonenshein A.L."/>
            <person name="Daum R.S."/>
        </authorList>
    </citation>
    <scope>FUNCTION</scope>
    <scope>DNA-BINDING</scope>
    <scope>DISRUPTION PHENOTYPE</scope>
    <source>
        <strain>USA300</strain>
    </source>
</reference>
<feature type="chain" id="PRO_1000051542" description="Global transcriptional regulator CodY">
    <location>
        <begin position="1"/>
        <end position="257"/>
    </location>
</feature>
<feature type="DNA-binding region" description="H-T-H motif" evidence="1">
    <location>
        <begin position="203"/>
        <end position="222"/>
    </location>
</feature>
<feature type="region of interest" description="GAF domain" evidence="1">
    <location>
        <begin position="1"/>
        <end position="155"/>
    </location>
</feature>
<feature type="helix" evidence="5">
    <location>
        <begin position="3"/>
        <end position="14"/>
    </location>
</feature>
<feature type="helix" evidence="5">
    <location>
        <begin position="24"/>
        <end position="35"/>
    </location>
</feature>
<feature type="strand" evidence="5">
    <location>
        <begin position="37"/>
        <end position="43"/>
    </location>
</feature>
<feature type="strand" evidence="5">
    <location>
        <begin position="48"/>
        <end position="52"/>
    </location>
</feature>
<feature type="helix" evidence="5">
    <location>
        <begin position="60"/>
        <end position="68"/>
    </location>
</feature>
<feature type="helix" evidence="5">
    <location>
        <begin position="73"/>
        <end position="79"/>
    </location>
</feature>
<feature type="strand" evidence="5">
    <location>
        <begin position="86"/>
        <end position="89"/>
    </location>
</feature>
<feature type="turn" evidence="5">
    <location>
        <begin position="103"/>
        <end position="108"/>
    </location>
</feature>
<feature type="strand" evidence="5">
    <location>
        <begin position="110"/>
        <end position="118"/>
    </location>
</feature>
<feature type="strand" evidence="5">
    <location>
        <begin position="121"/>
        <end position="132"/>
    </location>
</feature>
<feature type="helix" evidence="5">
    <location>
        <begin position="137"/>
        <end position="178"/>
    </location>
</feature>
<feature type="helix" evidence="5">
    <location>
        <begin position="181"/>
        <end position="194"/>
    </location>
</feature>
<feature type="strand" evidence="5">
    <location>
        <begin position="196"/>
        <end position="201"/>
    </location>
</feature>
<feature type="helix" evidence="5">
    <location>
        <begin position="203"/>
        <end position="210"/>
    </location>
</feature>
<feature type="helix" evidence="5">
    <location>
        <begin position="214"/>
        <end position="226"/>
    </location>
</feature>
<feature type="strand" evidence="5">
    <location>
        <begin position="229"/>
        <end position="234"/>
    </location>
</feature>
<feature type="strand" evidence="5">
    <location>
        <begin position="236"/>
        <end position="238"/>
    </location>
</feature>
<feature type="strand" evidence="5">
    <location>
        <begin position="240"/>
        <end position="246"/>
    </location>
</feature>
<feature type="helix" evidence="5">
    <location>
        <begin position="249"/>
        <end position="255"/>
    </location>
</feature>
<proteinExistence type="evidence at protein level"/>
<organism>
    <name type="scientific">Staphylococcus aureus (strain USA300)</name>
    <dbReference type="NCBI Taxonomy" id="367830"/>
    <lineage>
        <taxon>Bacteria</taxon>
        <taxon>Bacillati</taxon>
        <taxon>Bacillota</taxon>
        <taxon>Bacilli</taxon>
        <taxon>Bacillales</taxon>
        <taxon>Staphylococcaceae</taxon>
        <taxon>Staphylococcus</taxon>
    </lineage>
</organism>
<keyword id="KW-0002">3D-structure</keyword>
<keyword id="KW-0963">Cytoplasm</keyword>
<keyword id="KW-0238">DNA-binding</keyword>
<keyword id="KW-0678">Repressor</keyword>
<keyword id="KW-0804">Transcription</keyword>
<keyword id="KW-0805">Transcription regulation</keyword>
<dbReference type="EMBL" id="CP000255">
    <property type="protein sequence ID" value="ABD22108.1"/>
    <property type="molecule type" value="Genomic_DNA"/>
</dbReference>
<dbReference type="RefSeq" id="WP_000055337.1">
    <property type="nucleotide sequence ID" value="NZ_CP027476.1"/>
</dbReference>
<dbReference type="PDB" id="8C7O">
    <property type="method" value="X-ray"/>
    <property type="resolution" value="2.05 A"/>
    <property type="chains" value="A/B=1-257"/>
</dbReference>
<dbReference type="PDBsum" id="8C7O"/>
<dbReference type="SMR" id="Q2FHI3"/>
<dbReference type="KEGG" id="saa:SAUSA300_1148"/>
<dbReference type="HOGENOM" id="CLU_089581_0_0_9"/>
<dbReference type="OMA" id="FPEEYNE"/>
<dbReference type="Proteomes" id="UP000001939">
    <property type="component" value="Chromosome"/>
</dbReference>
<dbReference type="GO" id="GO:0005737">
    <property type="term" value="C:cytoplasm"/>
    <property type="evidence" value="ECO:0007669"/>
    <property type="project" value="UniProtKB-SubCell"/>
</dbReference>
<dbReference type="GO" id="GO:0003677">
    <property type="term" value="F:DNA binding"/>
    <property type="evidence" value="ECO:0007669"/>
    <property type="project" value="UniProtKB-UniRule"/>
</dbReference>
<dbReference type="GO" id="GO:0003700">
    <property type="term" value="F:DNA-binding transcription factor activity"/>
    <property type="evidence" value="ECO:0007669"/>
    <property type="project" value="InterPro"/>
</dbReference>
<dbReference type="GO" id="GO:0005525">
    <property type="term" value="F:GTP binding"/>
    <property type="evidence" value="ECO:0007669"/>
    <property type="project" value="InterPro"/>
</dbReference>
<dbReference type="GO" id="GO:0045892">
    <property type="term" value="P:negative regulation of DNA-templated transcription"/>
    <property type="evidence" value="ECO:0007669"/>
    <property type="project" value="UniProtKB-UniRule"/>
</dbReference>
<dbReference type="FunFam" id="1.10.10.10:FF:000034">
    <property type="entry name" value="GTP-sensing transcriptional pleiotropic repressor CodY"/>
    <property type="match status" value="1"/>
</dbReference>
<dbReference type="FunFam" id="3.30.450.40:FF:000003">
    <property type="entry name" value="GTP-sensing transcriptional pleiotropic repressor CodY"/>
    <property type="match status" value="1"/>
</dbReference>
<dbReference type="Gene3D" id="3.30.450.40">
    <property type="match status" value="1"/>
</dbReference>
<dbReference type="Gene3D" id="1.10.10.10">
    <property type="entry name" value="Winged helix-like DNA-binding domain superfamily/Winged helix DNA-binding domain"/>
    <property type="match status" value="1"/>
</dbReference>
<dbReference type="HAMAP" id="MF_00621">
    <property type="entry name" value="HTH_type_CodY"/>
    <property type="match status" value="1"/>
</dbReference>
<dbReference type="InterPro" id="IPR014154">
    <property type="entry name" value="CodY"/>
</dbReference>
<dbReference type="InterPro" id="IPR029016">
    <property type="entry name" value="GAF-like_dom_sf"/>
</dbReference>
<dbReference type="InterPro" id="IPR013198">
    <property type="entry name" value="GTP_trans_reg_CodY_C"/>
</dbReference>
<dbReference type="InterPro" id="IPR010312">
    <property type="entry name" value="Transc_reg_CodY_N"/>
</dbReference>
<dbReference type="InterPro" id="IPR036388">
    <property type="entry name" value="WH-like_DNA-bd_sf"/>
</dbReference>
<dbReference type="InterPro" id="IPR036390">
    <property type="entry name" value="WH_DNA-bd_sf"/>
</dbReference>
<dbReference type="NCBIfam" id="TIGR02787">
    <property type="entry name" value="codY_Gpos"/>
    <property type="match status" value="1"/>
</dbReference>
<dbReference type="NCBIfam" id="NF003170">
    <property type="entry name" value="PRK04158.1"/>
    <property type="match status" value="1"/>
</dbReference>
<dbReference type="PANTHER" id="PTHR40062:SF1">
    <property type="entry name" value="GLOBAL TRANSCRIPTIONAL REGULATOR CODY"/>
    <property type="match status" value="1"/>
</dbReference>
<dbReference type="PANTHER" id="PTHR40062">
    <property type="entry name" value="GTP-SENSING TRANSCRIPTIONAL PLEIOTROPIC REPRESSOR CODY"/>
    <property type="match status" value="1"/>
</dbReference>
<dbReference type="Pfam" id="PF06018">
    <property type="entry name" value="CodY"/>
    <property type="match status" value="1"/>
</dbReference>
<dbReference type="Pfam" id="PF08222">
    <property type="entry name" value="HTH_CodY"/>
    <property type="match status" value="1"/>
</dbReference>
<dbReference type="PIRSF" id="PIRSF011572">
    <property type="entry name" value="GTP_sensing_CodY"/>
    <property type="match status" value="1"/>
</dbReference>
<dbReference type="SUPFAM" id="SSF46785">
    <property type="entry name" value="Winged helix' DNA-binding domain"/>
    <property type="match status" value="1"/>
</dbReference>
<name>CODY_STAA3</name>
<comment type="function">
    <text evidence="1">DNA-binding global transcriptional regulator which is involved in the adaptive response to starvation and acts by directly or indirectly controlling the expression of numerous genes in response to nutrient availability. During rapid exponential growth, CodY is highly active and represses genes whose products allow adaptation to nutrient depletion.</text>
</comment>
<comment type="function">
    <text evidence="2">Additionally, in pathogenic bacteria, CodY also regulates virulence gene expression and provides a regulatory link between metabolism and pathogenesis (PubMed:22526672). Contributes to repression of the regulatory genes agr and sae and of the virulence genes hla and lukF-PV, encoding part of the Panton-Valentine leukocidin (PVL) (PubMed:22526672). Binds directly to the lukSF-PV regulatory region (PubMed:22526672). Represses the virulence of USA300 in two animal models of disease (PubMed:22526672).</text>
</comment>
<comment type="subcellular location">
    <subcellularLocation>
        <location evidence="1">Cytoplasm</location>
    </subcellularLocation>
</comment>
<comment type="disruption phenotype">
    <text evidence="2">Deletion of the gene results in modestly increased expression of the global regulators agr and saeRS, as well as the gene encoding the toxin alpha-hemolysin (hla) (PubMed:22526672). A substantial increase in expression of the lukF-PV gene is also observed (PubMed:22526672). Deletion of the gene increases the virulence of USA300 in necrotizing pneumonia and skin infection (PubMed:22526672).</text>
</comment>
<comment type="similarity">
    <text evidence="1">Belongs to the CodY family.</text>
</comment>
<gene>
    <name evidence="1 3" type="primary">codY</name>
    <name type="ordered locus">SAUSA300_1148</name>
</gene>
<protein>
    <recommendedName>
        <fullName evidence="1 4">Global transcriptional regulator CodY</fullName>
    </recommendedName>
</protein>
<sequence>MSLLSKTRELNTLLQKHKGIAVDFKDVAQTISSVTVTNVFIVSRRGKILGSSLNELLKSQRIIQMLEERHIPSEYTERLMEVKQTESNIDIDNVLTVFPPENRELFIDSRTTIFPILGGGERLGTLVLGRVHDDFNENDLVLGEYAATVIGMEILREKHSEVEKEARDKAAITMAINSLSYSEKEAIEHIFEELGGTEGLLIASKVADRVGITRSVIVNALRKLESAGVIESRSLGMKGTFIKVKKEKFLDELEKSK</sequence>
<evidence type="ECO:0000255" key="1">
    <source>
        <dbReference type="HAMAP-Rule" id="MF_00621"/>
    </source>
</evidence>
<evidence type="ECO:0000269" key="2">
    <source>
    </source>
</evidence>
<evidence type="ECO:0000303" key="3">
    <source>
    </source>
</evidence>
<evidence type="ECO:0000305" key="4"/>
<evidence type="ECO:0007829" key="5">
    <source>
        <dbReference type="PDB" id="8C7O"/>
    </source>
</evidence>